<comment type="function">
    <text evidence="1">Plays an important role in endoplasmic reticulum-associated degradation (ERAD) that mediates ubiquitin-dependent degradation of misfolded endoplasmic reticulum proteins. Involved in inhibition of lipid droplet degradation. Involved in stress granule disassembly.</text>
</comment>
<comment type="subcellular location">
    <subcellularLocation>
        <location evidence="1">Cytoplasm</location>
    </subcellularLocation>
    <subcellularLocation>
        <location evidence="1">Lipid droplet</location>
    </subcellularLocation>
    <subcellularLocation>
        <location evidence="1">Endoplasmic reticulum</location>
    </subcellularLocation>
</comment>
<sequence length="445" mass="52290">MAALEERGLSQDQTEKLLQFQDLTGIESIDQCRQTLQQHNWNIETAVQDRLNEQEGVPRVFNTTPNRPLQVNTADHRVYSYVVSRPQPRGLLGWGYYLIMLPFRITYYTVLDIFRFALRFIRPDPRSRVTDPVGDVVSFIHLFEEKYGSTHPVFYQGTYSQALNDAKQELRFLLVYLHGEDHQDSDDFCRNTLCTSEVTHFINSRMLFWACSSNKPEGFRVSQALHESTYPFLAMIMLKDRRMTVVGRLEGLIQPQDLINQLTFIIEANQTYLVSERLEREERNQTQVLRQQQDEAYLVSLRADQEKERKKKEKQDQKRREEEEAQRKQMLEERKKRNLEEEKERKSECLPAEPVPDHPDNVKIIFKMPNGTRVERRFLFTQSLSVIHDFLFSLKETPEKFQIVTSFPRQVLPCLPSEEIPVPPTLQEAGLSQSQLLFVQDLTDD</sequence>
<dbReference type="EMBL" id="BC072879">
    <property type="protein sequence ID" value="AAH72879.1"/>
    <property type="molecule type" value="mRNA"/>
</dbReference>
<dbReference type="RefSeq" id="NP_001085517.1">
    <property type="nucleotide sequence ID" value="NM_001092048.1"/>
</dbReference>
<dbReference type="SMR" id="Q6GQ69"/>
<dbReference type="DNASU" id="443943"/>
<dbReference type="GeneID" id="443943"/>
<dbReference type="KEGG" id="xla:443943"/>
<dbReference type="AGR" id="Xenbase:XB-GENE-948055"/>
<dbReference type="CTD" id="443943"/>
<dbReference type="Xenbase" id="XB-GENE-948055">
    <property type="gene designation" value="faf2.L"/>
</dbReference>
<dbReference type="OMA" id="QISVRCP"/>
<dbReference type="OrthoDB" id="1026733at2759"/>
<dbReference type="Proteomes" id="UP000186698">
    <property type="component" value="Chromosome 3L"/>
</dbReference>
<dbReference type="Bgee" id="443943">
    <property type="expression patterns" value="Expressed in neurula embryo and 19 other cell types or tissues"/>
</dbReference>
<dbReference type="GO" id="GO:0005783">
    <property type="term" value="C:endoplasmic reticulum"/>
    <property type="evidence" value="ECO:0000250"/>
    <property type="project" value="UniProtKB"/>
</dbReference>
<dbReference type="GO" id="GO:0005811">
    <property type="term" value="C:lipid droplet"/>
    <property type="evidence" value="ECO:0007669"/>
    <property type="project" value="UniProtKB-SubCell"/>
</dbReference>
<dbReference type="GO" id="GO:0030674">
    <property type="term" value="F:protein-macromolecule adaptor activity"/>
    <property type="evidence" value="ECO:0000250"/>
    <property type="project" value="UniProtKB"/>
</dbReference>
<dbReference type="GO" id="GO:0043130">
    <property type="term" value="F:ubiquitin binding"/>
    <property type="evidence" value="ECO:0000318"/>
    <property type="project" value="GO_Central"/>
</dbReference>
<dbReference type="GO" id="GO:0036503">
    <property type="term" value="P:ERAD pathway"/>
    <property type="evidence" value="ECO:0000318"/>
    <property type="project" value="GO_Central"/>
</dbReference>
<dbReference type="GO" id="GO:0035617">
    <property type="term" value="P:stress granule disassembly"/>
    <property type="evidence" value="ECO:0000250"/>
    <property type="project" value="UniProtKB"/>
</dbReference>
<dbReference type="CDD" id="cd02991">
    <property type="entry name" value="UAS_ETEA"/>
    <property type="match status" value="1"/>
</dbReference>
<dbReference type="CDD" id="cd14414">
    <property type="entry name" value="UBA_FAF2"/>
    <property type="match status" value="1"/>
</dbReference>
<dbReference type="CDD" id="cd16120">
    <property type="entry name" value="UBX_UBXN3B"/>
    <property type="match status" value="1"/>
</dbReference>
<dbReference type="FunFam" id="3.10.20.90:FF:000101">
    <property type="entry name" value="FAS-associated factor 2 isoform X2"/>
    <property type="match status" value="1"/>
</dbReference>
<dbReference type="FunFam" id="3.40.30.10:FF:000066">
    <property type="entry name" value="FAS-associated factor 2 isoform X2"/>
    <property type="match status" value="1"/>
</dbReference>
<dbReference type="Gene3D" id="1.10.8.10">
    <property type="entry name" value="DNA helicase RuvA subunit, C-terminal domain"/>
    <property type="match status" value="1"/>
</dbReference>
<dbReference type="Gene3D" id="3.40.30.10">
    <property type="entry name" value="Glutaredoxin"/>
    <property type="match status" value="1"/>
</dbReference>
<dbReference type="Gene3D" id="3.10.20.90">
    <property type="entry name" value="Phosphatidylinositol 3-kinase Catalytic Subunit, Chain A, domain 1"/>
    <property type="match status" value="1"/>
</dbReference>
<dbReference type="InterPro" id="IPR049483">
    <property type="entry name" value="FAF1_2-like_UAS"/>
</dbReference>
<dbReference type="InterPro" id="IPR036249">
    <property type="entry name" value="Thioredoxin-like_sf"/>
</dbReference>
<dbReference type="InterPro" id="IPR006577">
    <property type="entry name" value="UAS"/>
</dbReference>
<dbReference type="InterPro" id="IPR009060">
    <property type="entry name" value="UBA-like_sf"/>
</dbReference>
<dbReference type="InterPro" id="IPR054109">
    <property type="entry name" value="UBA_8"/>
</dbReference>
<dbReference type="InterPro" id="IPR029071">
    <property type="entry name" value="Ubiquitin-like_domsf"/>
</dbReference>
<dbReference type="InterPro" id="IPR001012">
    <property type="entry name" value="UBX_dom"/>
</dbReference>
<dbReference type="InterPro" id="IPR050730">
    <property type="entry name" value="UBX_domain-protein"/>
</dbReference>
<dbReference type="PANTHER" id="PTHR23322:SF1">
    <property type="entry name" value="FAS-ASSOCIATED FACTOR 2"/>
    <property type="match status" value="1"/>
</dbReference>
<dbReference type="PANTHER" id="PTHR23322">
    <property type="entry name" value="FAS-ASSOCIATED PROTEIN"/>
    <property type="match status" value="1"/>
</dbReference>
<dbReference type="Pfam" id="PF21021">
    <property type="entry name" value="FAF1"/>
    <property type="match status" value="1"/>
</dbReference>
<dbReference type="Pfam" id="PF22566">
    <property type="entry name" value="UBA_8"/>
    <property type="match status" value="1"/>
</dbReference>
<dbReference type="Pfam" id="PF00789">
    <property type="entry name" value="UBX"/>
    <property type="match status" value="1"/>
</dbReference>
<dbReference type="SMART" id="SM00594">
    <property type="entry name" value="UAS"/>
    <property type="match status" value="1"/>
</dbReference>
<dbReference type="SUPFAM" id="SSF52833">
    <property type="entry name" value="Thioredoxin-like"/>
    <property type="match status" value="1"/>
</dbReference>
<dbReference type="SUPFAM" id="SSF46934">
    <property type="entry name" value="UBA-like"/>
    <property type="match status" value="1"/>
</dbReference>
<dbReference type="SUPFAM" id="SSF54236">
    <property type="entry name" value="Ubiquitin-like"/>
    <property type="match status" value="1"/>
</dbReference>
<dbReference type="PROSITE" id="PS50033">
    <property type="entry name" value="UBX"/>
    <property type="match status" value="1"/>
</dbReference>
<reference key="1">
    <citation type="submission" date="2004-06" db="EMBL/GenBank/DDBJ databases">
        <authorList>
            <consortium name="NIH - Xenopus Gene Collection (XGC) project"/>
        </authorList>
    </citation>
    <scope>NUCLEOTIDE SEQUENCE [LARGE SCALE MRNA]</scope>
    <source>
        <tissue>Ovary</tissue>
    </source>
</reference>
<organism>
    <name type="scientific">Xenopus laevis</name>
    <name type="common">African clawed frog</name>
    <dbReference type="NCBI Taxonomy" id="8355"/>
    <lineage>
        <taxon>Eukaryota</taxon>
        <taxon>Metazoa</taxon>
        <taxon>Chordata</taxon>
        <taxon>Craniata</taxon>
        <taxon>Vertebrata</taxon>
        <taxon>Euteleostomi</taxon>
        <taxon>Amphibia</taxon>
        <taxon>Batrachia</taxon>
        <taxon>Anura</taxon>
        <taxon>Pipoidea</taxon>
        <taxon>Pipidae</taxon>
        <taxon>Xenopodinae</taxon>
        <taxon>Xenopus</taxon>
        <taxon>Xenopus</taxon>
    </lineage>
</organism>
<proteinExistence type="evidence at transcript level"/>
<accession>Q6GQ69</accession>
<evidence type="ECO:0000250" key="1">
    <source>
        <dbReference type="UniProtKB" id="Q96CS3"/>
    </source>
</evidence>
<evidence type="ECO:0000255" key="2"/>
<evidence type="ECO:0000255" key="3">
    <source>
        <dbReference type="PROSITE-ProRule" id="PRU00215"/>
    </source>
</evidence>
<evidence type="ECO:0000256" key="4">
    <source>
        <dbReference type="SAM" id="MobiDB-lite"/>
    </source>
</evidence>
<keyword id="KW-0175">Coiled coil</keyword>
<keyword id="KW-0963">Cytoplasm</keyword>
<keyword id="KW-0256">Endoplasmic reticulum</keyword>
<keyword id="KW-0551">Lipid droplet</keyword>
<keyword id="KW-1185">Reference proteome</keyword>
<name>FAF2B_XENLA</name>
<feature type="chain" id="PRO_0000244068" description="FAS-associated factor 2-B">
    <location>
        <begin position="1"/>
        <end position="445"/>
    </location>
</feature>
<feature type="domain" description="UBA">
    <location>
        <begin position="12"/>
        <end position="48"/>
    </location>
</feature>
<feature type="domain" description="UBX" evidence="3">
    <location>
        <begin position="357"/>
        <end position="439"/>
    </location>
</feature>
<feature type="region of interest" description="Disordered" evidence="4">
    <location>
        <begin position="302"/>
        <end position="355"/>
    </location>
</feature>
<feature type="coiled-coil region" evidence="2">
    <location>
        <begin position="275"/>
        <end position="353"/>
    </location>
</feature>
<feature type="compositionally biased region" description="Basic and acidic residues" evidence="4">
    <location>
        <begin position="303"/>
        <end position="348"/>
    </location>
</feature>
<gene>
    <name type="primary">faf2-b</name>
    <name type="synonym">ubxd8-b</name>
</gene>
<protein>
    <recommendedName>
        <fullName>FAS-associated factor 2-B</fullName>
    </recommendedName>
    <alternativeName>
        <fullName>UBX domain-containing protein 8-B</fullName>
    </alternativeName>
</protein>